<feature type="chain" id="PRO_0000070407" description="Ribosomal RNA large subunit methyltransferase M">
    <location>
        <begin position="1"/>
        <end position="363"/>
    </location>
</feature>
<feature type="active site" description="Proton acceptor" evidence="1">
    <location>
        <position position="313"/>
    </location>
</feature>
<feature type="binding site" evidence="1">
    <location>
        <position position="194"/>
    </location>
    <ligand>
        <name>S-adenosyl-L-methionine</name>
        <dbReference type="ChEBI" id="CHEBI:59789"/>
    </ligand>
</feature>
<feature type="binding site" evidence="1">
    <location>
        <begin position="227"/>
        <end position="230"/>
    </location>
    <ligand>
        <name>S-adenosyl-L-methionine</name>
        <dbReference type="ChEBI" id="CHEBI:59789"/>
    </ligand>
</feature>
<feature type="binding site" evidence="1">
    <location>
        <position position="246"/>
    </location>
    <ligand>
        <name>S-adenosyl-L-methionine</name>
        <dbReference type="ChEBI" id="CHEBI:59789"/>
    </ligand>
</feature>
<feature type="binding site" evidence="1">
    <location>
        <position position="266"/>
    </location>
    <ligand>
        <name>S-adenosyl-L-methionine</name>
        <dbReference type="ChEBI" id="CHEBI:59789"/>
    </ligand>
</feature>
<feature type="binding site" evidence="1">
    <location>
        <position position="284"/>
    </location>
    <ligand>
        <name>S-adenosyl-L-methionine</name>
        <dbReference type="ChEBI" id="CHEBI:59789"/>
    </ligand>
</feature>
<organism>
    <name type="scientific">Haemophilus influenzae (strain 86-028NP)</name>
    <dbReference type="NCBI Taxonomy" id="281310"/>
    <lineage>
        <taxon>Bacteria</taxon>
        <taxon>Pseudomonadati</taxon>
        <taxon>Pseudomonadota</taxon>
        <taxon>Gammaproteobacteria</taxon>
        <taxon>Pasteurellales</taxon>
        <taxon>Pasteurellaceae</taxon>
        <taxon>Haemophilus</taxon>
    </lineage>
</organism>
<evidence type="ECO:0000255" key="1">
    <source>
        <dbReference type="HAMAP-Rule" id="MF_01551"/>
    </source>
</evidence>
<keyword id="KW-0963">Cytoplasm</keyword>
<keyword id="KW-0489">Methyltransferase</keyword>
<keyword id="KW-0698">rRNA processing</keyword>
<keyword id="KW-0949">S-adenosyl-L-methionine</keyword>
<keyword id="KW-0808">Transferase</keyword>
<proteinExistence type="inferred from homology"/>
<reference key="1">
    <citation type="journal article" date="2005" name="J. Bacteriol.">
        <title>Genomic sequence of an otitis media isolate of nontypeable Haemophilus influenzae: comparative study with H. influenzae serotype d, strain KW20.</title>
        <authorList>
            <person name="Harrison A."/>
            <person name="Dyer D.W."/>
            <person name="Gillaspy A."/>
            <person name="Ray W.C."/>
            <person name="Mungur R."/>
            <person name="Carson M.B."/>
            <person name="Zhong H."/>
            <person name="Gipson J."/>
            <person name="Gipson M."/>
            <person name="Johnson L.S."/>
            <person name="Lewis L."/>
            <person name="Bakaletz L.O."/>
            <person name="Munson R.S. Jr."/>
        </authorList>
    </citation>
    <scope>NUCLEOTIDE SEQUENCE [LARGE SCALE GENOMIC DNA]</scope>
    <source>
        <strain>86-028NP</strain>
    </source>
</reference>
<comment type="function">
    <text evidence="1">Catalyzes the 2'-O-methylation at nucleotide C2498 in 23S rRNA.</text>
</comment>
<comment type="catalytic activity">
    <reaction evidence="1">
        <text>cytidine(2498) in 23S rRNA + S-adenosyl-L-methionine = 2'-O-methylcytidine(2498) in 23S rRNA + S-adenosyl-L-homocysteine + H(+)</text>
        <dbReference type="Rhea" id="RHEA:42788"/>
        <dbReference type="Rhea" id="RHEA-COMP:10244"/>
        <dbReference type="Rhea" id="RHEA-COMP:10245"/>
        <dbReference type="ChEBI" id="CHEBI:15378"/>
        <dbReference type="ChEBI" id="CHEBI:57856"/>
        <dbReference type="ChEBI" id="CHEBI:59789"/>
        <dbReference type="ChEBI" id="CHEBI:74495"/>
        <dbReference type="ChEBI" id="CHEBI:82748"/>
        <dbReference type="EC" id="2.1.1.186"/>
    </reaction>
</comment>
<comment type="subunit">
    <text evidence="1">Monomer.</text>
</comment>
<comment type="subcellular location">
    <subcellularLocation>
        <location evidence="1">Cytoplasm</location>
    </subcellularLocation>
</comment>
<comment type="similarity">
    <text evidence="1">Belongs to the class I-like SAM-binding methyltransferase superfamily. RNA methyltransferase RlmE family. RlmM subfamily.</text>
</comment>
<dbReference type="EC" id="2.1.1.186" evidence="1"/>
<dbReference type="EMBL" id="CP000057">
    <property type="protein sequence ID" value="AAX88193.1"/>
    <property type="molecule type" value="Genomic_DNA"/>
</dbReference>
<dbReference type="RefSeq" id="WP_011272436.1">
    <property type="nucleotide sequence ID" value="NC_007146.2"/>
</dbReference>
<dbReference type="SMR" id="Q4QLA4"/>
<dbReference type="GeneID" id="93220198"/>
<dbReference type="KEGG" id="hit:NTHI1366"/>
<dbReference type="HOGENOM" id="CLU_043780_0_0_6"/>
<dbReference type="Proteomes" id="UP000002525">
    <property type="component" value="Chromosome"/>
</dbReference>
<dbReference type="GO" id="GO:0005737">
    <property type="term" value="C:cytoplasm"/>
    <property type="evidence" value="ECO:0007669"/>
    <property type="project" value="UniProtKB-SubCell"/>
</dbReference>
<dbReference type="GO" id="GO:0008757">
    <property type="term" value="F:S-adenosylmethionine-dependent methyltransferase activity"/>
    <property type="evidence" value="ECO:0007669"/>
    <property type="project" value="UniProtKB-UniRule"/>
</dbReference>
<dbReference type="GO" id="GO:0032259">
    <property type="term" value="P:methylation"/>
    <property type="evidence" value="ECO:0007669"/>
    <property type="project" value="UniProtKB-KW"/>
</dbReference>
<dbReference type="GO" id="GO:0006364">
    <property type="term" value="P:rRNA processing"/>
    <property type="evidence" value="ECO:0007669"/>
    <property type="project" value="UniProtKB-UniRule"/>
</dbReference>
<dbReference type="Gene3D" id="3.30.2300.20">
    <property type="match status" value="1"/>
</dbReference>
<dbReference type="Gene3D" id="3.30.70.2810">
    <property type="match status" value="1"/>
</dbReference>
<dbReference type="Gene3D" id="3.40.50.150">
    <property type="entry name" value="Vaccinia Virus protein VP39"/>
    <property type="match status" value="1"/>
</dbReference>
<dbReference type="HAMAP" id="MF_01551">
    <property type="entry name" value="23SrRNA_methyltr_M"/>
    <property type="match status" value="1"/>
</dbReference>
<dbReference type="InterPro" id="IPR040739">
    <property type="entry name" value="RlmM_FDX"/>
</dbReference>
<dbReference type="InterPro" id="IPR048646">
    <property type="entry name" value="RlmM_THUMP-like"/>
</dbReference>
<dbReference type="InterPro" id="IPR002877">
    <property type="entry name" value="RNA_MeTrfase_FtsJ_dom"/>
</dbReference>
<dbReference type="InterPro" id="IPR011224">
    <property type="entry name" value="rRNA_MeTrfase_M"/>
</dbReference>
<dbReference type="InterPro" id="IPR029063">
    <property type="entry name" value="SAM-dependent_MTases_sf"/>
</dbReference>
<dbReference type="NCBIfam" id="NF008734">
    <property type="entry name" value="PRK11760.1"/>
    <property type="match status" value="1"/>
</dbReference>
<dbReference type="PANTHER" id="PTHR37524">
    <property type="entry name" value="RIBOSOMAL RNA LARGE SUBUNIT METHYLTRANSFERASE M"/>
    <property type="match status" value="1"/>
</dbReference>
<dbReference type="PANTHER" id="PTHR37524:SF2">
    <property type="entry name" value="RIBOSOMAL RNA METHYLTRANSFERASE FTSJ DOMAIN-CONTAINING PROTEIN"/>
    <property type="match status" value="1"/>
</dbReference>
<dbReference type="Pfam" id="PF01728">
    <property type="entry name" value="FtsJ"/>
    <property type="match status" value="1"/>
</dbReference>
<dbReference type="Pfam" id="PF18125">
    <property type="entry name" value="RlmM_FDX"/>
    <property type="match status" value="1"/>
</dbReference>
<dbReference type="Pfam" id="PF21239">
    <property type="entry name" value="RLMM_N"/>
    <property type="match status" value="1"/>
</dbReference>
<dbReference type="PIRSF" id="PIRSF028774">
    <property type="entry name" value="UCP028774"/>
    <property type="match status" value="1"/>
</dbReference>
<dbReference type="SUPFAM" id="SSF53335">
    <property type="entry name" value="S-adenosyl-L-methionine-dependent methyltransferases"/>
    <property type="match status" value="1"/>
</dbReference>
<gene>
    <name evidence="1" type="primary">rlmM</name>
    <name type="ordered locus">NTHI1366</name>
</gene>
<sequence length="363" mass="41482">MNKLALYCRPGFEKEVAAEITDQASHLGVFGFARVQDNSGYVIFECYQPDEADRLARDIPFNRLIFARQMMVISDLLEDLDPADRISPIVAAFEELSQQVNFAQSSELFVETADTNEAKELSTFCRKFTVPLRQALKKQGWLSAKASQKCGQFLHCFFVKPNCCYVGYSYVDNHSSHFMGIPRLKFPADAPSRSTLKLEEAILTFIPRKEENKRLNENMIGVDLGACPGGWTYQLVKRGLFVYAVDHGKMAASLHDTGCIEHCAEDGFKFQPPKRKKVDWLVCDMVEQPSRISLLIGKWLLNGWCRETIFNLKLPMKKRYQEVILCLENLAVMLAEQNLNFDIQAKHLYHDREEITVHIALKP</sequence>
<protein>
    <recommendedName>
        <fullName evidence="1">Ribosomal RNA large subunit methyltransferase M</fullName>
        <ecNumber evidence="1">2.1.1.186</ecNumber>
    </recommendedName>
    <alternativeName>
        <fullName evidence="1">23S rRNA (cytidine2498-2'-O)-methyltransferase</fullName>
    </alternativeName>
    <alternativeName>
        <fullName evidence="1">23S rRNA 2'-O-ribose methyltransferase RlmM</fullName>
    </alternativeName>
</protein>
<accession>Q4QLA4</accession>
<name>RLMM_HAEI8</name>